<protein>
    <recommendedName>
        <fullName evidence="1">ATP synthase subunit alpha</fullName>
        <ecNumber evidence="1">7.1.2.2</ecNumber>
    </recommendedName>
    <alternativeName>
        <fullName evidence="1">ATP synthase F1 sector subunit alpha</fullName>
    </alternativeName>
    <alternativeName>
        <fullName evidence="1">F-ATPase subunit alpha</fullName>
    </alternativeName>
</protein>
<evidence type="ECO:0000255" key="1">
    <source>
        <dbReference type="HAMAP-Rule" id="MF_01346"/>
    </source>
</evidence>
<keyword id="KW-0066">ATP synthesis</keyword>
<keyword id="KW-0067">ATP-binding</keyword>
<keyword id="KW-1003">Cell membrane</keyword>
<keyword id="KW-0139">CF(1)</keyword>
<keyword id="KW-0375">Hydrogen ion transport</keyword>
<keyword id="KW-0406">Ion transport</keyword>
<keyword id="KW-0472">Membrane</keyword>
<keyword id="KW-0547">Nucleotide-binding</keyword>
<keyword id="KW-1278">Translocase</keyword>
<keyword id="KW-0813">Transport</keyword>
<feature type="chain" id="PRO_0000144328" description="ATP synthase subunit alpha">
    <location>
        <begin position="1"/>
        <end position="518"/>
    </location>
</feature>
<feature type="binding site" evidence="1">
    <location>
        <begin position="169"/>
        <end position="176"/>
    </location>
    <ligand>
        <name>ATP</name>
        <dbReference type="ChEBI" id="CHEBI:30616"/>
    </ligand>
</feature>
<feature type="site" description="Required for activity" evidence="1">
    <location>
        <position position="362"/>
    </location>
</feature>
<accession>P26679</accession>
<accession>I6SDC5</accession>
<sequence length="518" mass="56549">MAIKAEEISALIKEQIENYQNVLSVEEIGTVTYVGDGIARAHGLENAMSGELLEFSNGSYGMAQNLESNDVGIIILGDFESIREGDKVKRTGKIMEVPVGDALIGRVVNPLGQPIDGLGEIVTDKVRPVEAMAPGVMQRKSVNEPMQTGLKAIDALVPIGRGQRELVIGDRKTGKTSIAIDTILNQKGQDMICIYVAIGQKDSTVRTQVETLKKYGAMDYTIVVNAGASQPAPLLYIAPYAGTAMGEEFMYNGKHVLIIFDDLSKQAVAYRELSLLLRRPPGREAYPGDVFYLHSRLLERAAKLSDDLGGGSMTALPFVETQAGDISAYIPTNVISITDGQIFLESDLFYAGTRPAVDAGLSVSRVGGSAQIKAMKKVAGTLRLDLASYRELEAFTQFGSDLDAATQAKLNRGRRTVEILKQKLHAPLAVEKQVVILYALTHGFLDSIPVDSILDFEHELFEYLDTNHADIFETIRTTKDLPEEERLNQAIQEYKDIFLATKGNTSSTEDKLKSIQNA</sequence>
<gene>
    <name evidence="1" type="primary">atpA</name>
    <name type="ordered locus">EHR_08490</name>
</gene>
<comment type="function">
    <text>Produces ATP from ADP in the presence of a proton gradient across the membrane. The alpha chain is a regulatory subunit.</text>
</comment>
<comment type="catalytic activity">
    <reaction evidence="1">
        <text>ATP + H2O + 4 H(+)(in) = ADP + phosphate + 5 H(+)(out)</text>
        <dbReference type="Rhea" id="RHEA:57720"/>
        <dbReference type="ChEBI" id="CHEBI:15377"/>
        <dbReference type="ChEBI" id="CHEBI:15378"/>
        <dbReference type="ChEBI" id="CHEBI:30616"/>
        <dbReference type="ChEBI" id="CHEBI:43474"/>
        <dbReference type="ChEBI" id="CHEBI:456216"/>
        <dbReference type="EC" id="7.1.2.2"/>
    </reaction>
</comment>
<comment type="subunit">
    <text evidence="1">F-type ATPases have 2 components, CF(1) - the catalytic core - and CF(0) - the membrane proton channel. CF(1) has five subunits: alpha(3), beta(3), gamma(1), delta(1), epsilon(1). CF(0) has three main subunits: a(1), b(2) and c(9-12). The alpha and beta chains form an alternating ring which encloses part of the gamma chain. CF(1) is attached to CF(0) by a central stalk formed by the gamma and epsilon chains, while a peripheral stalk is formed by the delta and b chains.</text>
</comment>
<comment type="subcellular location">
    <subcellularLocation>
        <location evidence="1">Cell membrane</location>
        <topology evidence="1">Peripheral membrane protein</topology>
    </subcellularLocation>
</comment>
<comment type="similarity">
    <text evidence="1">Belongs to the ATPase alpha/beta chains family.</text>
</comment>
<dbReference type="EC" id="7.1.2.2" evidence="1"/>
<dbReference type="EMBL" id="M64265">
    <property type="protein sequence ID" value="AAA26864.1"/>
    <property type="molecule type" value="Genomic_DNA"/>
</dbReference>
<dbReference type="EMBL" id="M90060">
    <property type="protein sequence ID" value="AAA26857.1"/>
    <property type="molecule type" value="Genomic_DNA"/>
</dbReference>
<dbReference type="EMBL" id="CP003504">
    <property type="protein sequence ID" value="AFM70623.1"/>
    <property type="molecule type" value="Genomic_DNA"/>
</dbReference>
<dbReference type="RefSeq" id="WP_010737987.1">
    <property type="nucleotide sequence ID" value="NC_018081.1"/>
</dbReference>
<dbReference type="SMR" id="P26679"/>
<dbReference type="KEGG" id="ehr:EHR_08490"/>
<dbReference type="eggNOG" id="COG0056">
    <property type="taxonomic scope" value="Bacteria"/>
</dbReference>
<dbReference type="HOGENOM" id="CLU_010091_2_1_9"/>
<dbReference type="OrthoDB" id="9803053at2"/>
<dbReference type="Proteomes" id="UP000002895">
    <property type="component" value="Chromosome"/>
</dbReference>
<dbReference type="GO" id="GO:0005886">
    <property type="term" value="C:plasma membrane"/>
    <property type="evidence" value="ECO:0007669"/>
    <property type="project" value="UniProtKB-SubCell"/>
</dbReference>
<dbReference type="GO" id="GO:0045259">
    <property type="term" value="C:proton-transporting ATP synthase complex"/>
    <property type="evidence" value="ECO:0007669"/>
    <property type="project" value="UniProtKB-KW"/>
</dbReference>
<dbReference type="GO" id="GO:0043531">
    <property type="term" value="F:ADP binding"/>
    <property type="evidence" value="ECO:0007669"/>
    <property type="project" value="TreeGrafter"/>
</dbReference>
<dbReference type="GO" id="GO:0005524">
    <property type="term" value="F:ATP binding"/>
    <property type="evidence" value="ECO:0007669"/>
    <property type="project" value="UniProtKB-UniRule"/>
</dbReference>
<dbReference type="GO" id="GO:0046933">
    <property type="term" value="F:proton-transporting ATP synthase activity, rotational mechanism"/>
    <property type="evidence" value="ECO:0007669"/>
    <property type="project" value="UniProtKB-UniRule"/>
</dbReference>
<dbReference type="CDD" id="cd18113">
    <property type="entry name" value="ATP-synt_F1_alpha_C"/>
    <property type="match status" value="1"/>
</dbReference>
<dbReference type="CDD" id="cd18116">
    <property type="entry name" value="ATP-synt_F1_alpha_N"/>
    <property type="match status" value="1"/>
</dbReference>
<dbReference type="CDD" id="cd01132">
    <property type="entry name" value="F1-ATPase_alpha_CD"/>
    <property type="match status" value="1"/>
</dbReference>
<dbReference type="FunFam" id="1.20.150.20:FF:000001">
    <property type="entry name" value="ATP synthase subunit alpha"/>
    <property type="match status" value="1"/>
</dbReference>
<dbReference type="FunFam" id="2.40.30.20:FF:000001">
    <property type="entry name" value="ATP synthase subunit alpha"/>
    <property type="match status" value="1"/>
</dbReference>
<dbReference type="FunFam" id="3.40.50.300:FF:000002">
    <property type="entry name" value="ATP synthase subunit alpha"/>
    <property type="match status" value="1"/>
</dbReference>
<dbReference type="Gene3D" id="2.40.30.20">
    <property type="match status" value="1"/>
</dbReference>
<dbReference type="Gene3D" id="1.20.150.20">
    <property type="entry name" value="ATP synthase alpha/beta chain, C-terminal domain"/>
    <property type="match status" value="1"/>
</dbReference>
<dbReference type="Gene3D" id="3.40.50.300">
    <property type="entry name" value="P-loop containing nucleotide triphosphate hydrolases"/>
    <property type="match status" value="1"/>
</dbReference>
<dbReference type="HAMAP" id="MF_01346">
    <property type="entry name" value="ATP_synth_alpha_bact"/>
    <property type="match status" value="1"/>
</dbReference>
<dbReference type="InterPro" id="IPR023366">
    <property type="entry name" value="ATP_synth_asu-like_sf"/>
</dbReference>
<dbReference type="InterPro" id="IPR000793">
    <property type="entry name" value="ATP_synth_asu_C"/>
</dbReference>
<dbReference type="InterPro" id="IPR038376">
    <property type="entry name" value="ATP_synth_asu_C_sf"/>
</dbReference>
<dbReference type="InterPro" id="IPR033732">
    <property type="entry name" value="ATP_synth_F1_a_nt-bd_dom"/>
</dbReference>
<dbReference type="InterPro" id="IPR005294">
    <property type="entry name" value="ATP_synth_F1_asu"/>
</dbReference>
<dbReference type="InterPro" id="IPR020003">
    <property type="entry name" value="ATPase_a/bsu_AS"/>
</dbReference>
<dbReference type="InterPro" id="IPR004100">
    <property type="entry name" value="ATPase_F1/V1/A1_a/bsu_N"/>
</dbReference>
<dbReference type="InterPro" id="IPR036121">
    <property type="entry name" value="ATPase_F1/V1/A1_a/bsu_N_sf"/>
</dbReference>
<dbReference type="InterPro" id="IPR000194">
    <property type="entry name" value="ATPase_F1/V1/A1_a/bsu_nucl-bd"/>
</dbReference>
<dbReference type="InterPro" id="IPR027417">
    <property type="entry name" value="P-loop_NTPase"/>
</dbReference>
<dbReference type="NCBIfam" id="TIGR00962">
    <property type="entry name" value="atpA"/>
    <property type="match status" value="1"/>
</dbReference>
<dbReference type="NCBIfam" id="NF009884">
    <property type="entry name" value="PRK13343.1"/>
    <property type="match status" value="1"/>
</dbReference>
<dbReference type="PANTHER" id="PTHR48082">
    <property type="entry name" value="ATP SYNTHASE SUBUNIT ALPHA, MITOCHONDRIAL"/>
    <property type="match status" value="1"/>
</dbReference>
<dbReference type="PANTHER" id="PTHR48082:SF2">
    <property type="entry name" value="ATP SYNTHASE SUBUNIT ALPHA, MITOCHONDRIAL"/>
    <property type="match status" value="1"/>
</dbReference>
<dbReference type="Pfam" id="PF00006">
    <property type="entry name" value="ATP-synt_ab"/>
    <property type="match status" value="1"/>
</dbReference>
<dbReference type="Pfam" id="PF00306">
    <property type="entry name" value="ATP-synt_ab_C"/>
    <property type="match status" value="1"/>
</dbReference>
<dbReference type="Pfam" id="PF02874">
    <property type="entry name" value="ATP-synt_ab_N"/>
    <property type="match status" value="1"/>
</dbReference>
<dbReference type="PIRSF" id="PIRSF039088">
    <property type="entry name" value="F_ATPase_subunit_alpha"/>
    <property type="match status" value="1"/>
</dbReference>
<dbReference type="SUPFAM" id="SSF47917">
    <property type="entry name" value="C-terminal domain of alpha and beta subunits of F1 ATP synthase"/>
    <property type="match status" value="1"/>
</dbReference>
<dbReference type="SUPFAM" id="SSF50615">
    <property type="entry name" value="N-terminal domain of alpha and beta subunits of F1 ATP synthase"/>
    <property type="match status" value="1"/>
</dbReference>
<dbReference type="SUPFAM" id="SSF52540">
    <property type="entry name" value="P-loop containing nucleoside triphosphate hydrolases"/>
    <property type="match status" value="1"/>
</dbReference>
<dbReference type="PROSITE" id="PS00152">
    <property type="entry name" value="ATPASE_ALPHA_BETA"/>
    <property type="match status" value="1"/>
</dbReference>
<name>ATPA_ENTHA</name>
<proteinExistence type="inferred from homology"/>
<reference key="1">
    <citation type="journal article" date="1992" name="J. Bacteriol.">
        <title>Gene structure of Enterococcus hirae (Streptococcus faecalis) F1F0-ATPase, which functions as a regulator of cytoplasmic pH.</title>
        <authorList>
            <person name="Shibata C."/>
            <person name="Ehara T."/>
            <person name="Tomura K."/>
            <person name="Igarashi K."/>
            <person name="Kobayashi H."/>
        </authorList>
    </citation>
    <scope>NUCLEOTIDE SEQUENCE [GENOMIC DNA]</scope>
    <source>
        <strain>ATCC 9790 / DSM 20160 / JCM 8729 / LMG 6399 / NBRC 3181 / NCIMB 6459 / NCDO 1258 / NCTC 12367 / WDCM 00089 / R</strain>
    </source>
</reference>
<reference key="2">
    <citation type="journal article" date="2012" name="J. Bacteriol.">
        <title>Genome sequence of Enterococcus hirae (Streptococcus faecalis) ATCC 9790, a model organism for the study of ion transport, bioenergetics, and copper homeostasis.</title>
        <authorList>
            <person name="Gaechter T."/>
            <person name="Wunderlin C."/>
            <person name="Schmidheini T."/>
            <person name="Solioz M."/>
        </authorList>
    </citation>
    <scope>NUCLEOTIDE SEQUENCE [LARGE SCALE GENOMIC DNA]</scope>
    <source>
        <strain>ATCC 9790 / DSM 20160 / JCM 8729 / LMG 6399 / NBRC 3181 / NCIMB 6459 / NCDO 1258 / NCTC 12367 / WDCM 00089 / R</strain>
    </source>
</reference>
<organism>
    <name type="scientific">Enterococcus hirae (strain ATCC 9790 / DSM 20160 / JCM 8729 / LMG 6399 / NBRC 3181 / NCIMB 6459 / NCDO 1258 / NCTC 12367 / WDCM 00089 / R)</name>
    <dbReference type="NCBI Taxonomy" id="768486"/>
    <lineage>
        <taxon>Bacteria</taxon>
        <taxon>Bacillati</taxon>
        <taxon>Bacillota</taxon>
        <taxon>Bacilli</taxon>
        <taxon>Lactobacillales</taxon>
        <taxon>Enterococcaceae</taxon>
        <taxon>Enterococcus</taxon>
    </lineage>
</organism>